<proteinExistence type="inferred from homology"/>
<reference key="1">
    <citation type="journal article" date="2007" name="J. Bacteriol.">
        <title>Complete genome of acute rheumatic fever-associated serotype M5 Streptococcus pyogenes strain Manfredo.</title>
        <authorList>
            <person name="Holden M.T.G."/>
            <person name="Scott A."/>
            <person name="Cherevach I."/>
            <person name="Chillingworth T."/>
            <person name="Churcher C."/>
            <person name="Cronin A."/>
            <person name="Dowd L."/>
            <person name="Feltwell T."/>
            <person name="Hamlin N."/>
            <person name="Holroyd S."/>
            <person name="Jagels K."/>
            <person name="Moule S."/>
            <person name="Mungall K."/>
            <person name="Quail M.A."/>
            <person name="Price C."/>
            <person name="Rabbinowitsch E."/>
            <person name="Sharp S."/>
            <person name="Skelton J."/>
            <person name="Whitehead S."/>
            <person name="Barrell B.G."/>
            <person name="Kehoe M."/>
            <person name="Parkhill J."/>
        </authorList>
    </citation>
    <scope>NUCLEOTIDE SEQUENCE [LARGE SCALE GENOMIC DNA]</scope>
    <source>
        <strain>Manfredo</strain>
    </source>
</reference>
<feature type="chain" id="PRO_1000006527" description="tRNA (guanine-N(1)-)-methyltransferase">
    <location>
        <begin position="1"/>
        <end position="243"/>
    </location>
</feature>
<feature type="binding site" evidence="1">
    <location>
        <position position="108"/>
    </location>
    <ligand>
        <name>S-adenosyl-L-methionine</name>
        <dbReference type="ChEBI" id="CHEBI:59789"/>
    </ligand>
</feature>
<feature type="binding site" evidence="1">
    <location>
        <begin position="127"/>
        <end position="132"/>
    </location>
    <ligand>
        <name>S-adenosyl-L-methionine</name>
        <dbReference type="ChEBI" id="CHEBI:59789"/>
    </ligand>
</feature>
<accession>A2RF48</accession>
<gene>
    <name evidence="1" type="primary">trmD</name>
    <name type="ordered locus">SpyM51152</name>
</gene>
<evidence type="ECO:0000255" key="1">
    <source>
        <dbReference type="HAMAP-Rule" id="MF_00605"/>
    </source>
</evidence>
<comment type="function">
    <text evidence="1">Specifically methylates guanosine-37 in various tRNAs.</text>
</comment>
<comment type="catalytic activity">
    <reaction evidence="1">
        <text>guanosine(37) in tRNA + S-adenosyl-L-methionine = N(1)-methylguanosine(37) in tRNA + S-adenosyl-L-homocysteine + H(+)</text>
        <dbReference type="Rhea" id="RHEA:36899"/>
        <dbReference type="Rhea" id="RHEA-COMP:10145"/>
        <dbReference type="Rhea" id="RHEA-COMP:10147"/>
        <dbReference type="ChEBI" id="CHEBI:15378"/>
        <dbReference type="ChEBI" id="CHEBI:57856"/>
        <dbReference type="ChEBI" id="CHEBI:59789"/>
        <dbReference type="ChEBI" id="CHEBI:73542"/>
        <dbReference type="ChEBI" id="CHEBI:74269"/>
        <dbReference type="EC" id="2.1.1.228"/>
    </reaction>
</comment>
<comment type="subunit">
    <text evidence="1">Homodimer.</text>
</comment>
<comment type="subcellular location">
    <subcellularLocation>
        <location evidence="1">Cytoplasm</location>
    </subcellularLocation>
</comment>
<comment type="similarity">
    <text evidence="1">Belongs to the RNA methyltransferase TrmD family.</text>
</comment>
<name>TRMD_STRPG</name>
<dbReference type="EC" id="2.1.1.228" evidence="1"/>
<dbReference type="EMBL" id="AM295007">
    <property type="protein sequence ID" value="CAM30477.1"/>
    <property type="molecule type" value="Genomic_DNA"/>
</dbReference>
<dbReference type="RefSeq" id="WP_011888986.1">
    <property type="nucleotide sequence ID" value="NC_009332.1"/>
</dbReference>
<dbReference type="SMR" id="A2RF48"/>
<dbReference type="KEGG" id="spf:SpyM51152"/>
<dbReference type="HOGENOM" id="CLU_047363_0_1_9"/>
<dbReference type="GO" id="GO:0005829">
    <property type="term" value="C:cytosol"/>
    <property type="evidence" value="ECO:0007669"/>
    <property type="project" value="TreeGrafter"/>
</dbReference>
<dbReference type="GO" id="GO:0052906">
    <property type="term" value="F:tRNA (guanine(37)-N1)-methyltransferase activity"/>
    <property type="evidence" value="ECO:0007669"/>
    <property type="project" value="UniProtKB-UniRule"/>
</dbReference>
<dbReference type="GO" id="GO:0002939">
    <property type="term" value="P:tRNA N1-guanine methylation"/>
    <property type="evidence" value="ECO:0007669"/>
    <property type="project" value="TreeGrafter"/>
</dbReference>
<dbReference type="CDD" id="cd18080">
    <property type="entry name" value="TrmD-like"/>
    <property type="match status" value="1"/>
</dbReference>
<dbReference type="FunFam" id="1.10.1270.20:FF:000001">
    <property type="entry name" value="tRNA (guanine-N(1)-)-methyltransferase"/>
    <property type="match status" value="1"/>
</dbReference>
<dbReference type="FunFam" id="3.40.1280.10:FF:000001">
    <property type="entry name" value="tRNA (guanine-N(1)-)-methyltransferase"/>
    <property type="match status" value="1"/>
</dbReference>
<dbReference type="Gene3D" id="3.40.1280.10">
    <property type="match status" value="1"/>
</dbReference>
<dbReference type="Gene3D" id="1.10.1270.20">
    <property type="entry name" value="tRNA(m1g37)methyltransferase, domain 2"/>
    <property type="match status" value="1"/>
</dbReference>
<dbReference type="HAMAP" id="MF_00605">
    <property type="entry name" value="TrmD"/>
    <property type="match status" value="1"/>
</dbReference>
<dbReference type="InterPro" id="IPR029028">
    <property type="entry name" value="Alpha/beta_knot_MTases"/>
</dbReference>
<dbReference type="InterPro" id="IPR023148">
    <property type="entry name" value="tRNA_m1G_MeTrfase_C_sf"/>
</dbReference>
<dbReference type="InterPro" id="IPR002649">
    <property type="entry name" value="tRNA_m1G_MeTrfase_TrmD"/>
</dbReference>
<dbReference type="InterPro" id="IPR029026">
    <property type="entry name" value="tRNA_m1G_MTases_N"/>
</dbReference>
<dbReference type="InterPro" id="IPR016009">
    <property type="entry name" value="tRNA_MeTrfase_TRMD/TRM10"/>
</dbReference>
<dbReference type="NCBIfam" id="NF000648">
    <property type="entry name" value="PRK00026.1"/>
    <property type="match status" value="1"/>
</dbReference>
<dbReference type="NCBIfam" id="TIGR00088">
    <property type="entry name" value="trmD"/>
    <property type="match status" value="1"/>
</dbReference>
<dbReference type="PANTHER" id="PTHR46417">
    <property type="entry name" value="TRNA (GUANINE-N(1)-)-METHYLTRANSFERASE"/>
    <property type="match status" value="1"/>
</dbReference>
<dbReference type="PANTHER" id="PTHR46417:SF1">
    <property type="entry name" value="TRNA (GUANINE-N(1)-)-METHYLTRANSFERASE"/>
    <property type="match status" value="1"/>
</dbReference>
<dbReference type="Pfam" id="PF01746">
    <property type="entry name" value="tRNA_m1G_MT"/>
    <property type="match status" value="1"/>
</dbReference>
<dbReference type="PIRSF" id="PIRSF000386">
    <property type="entry name" value="tRNA_mtase"/>
    <property type="match status" value="1"/>
</dbReference>
<dbReference type="SUPFAM" id="SSF75217">
    <property type="entry name" value="alpha/beta knot"/>
    <property type="match status" value="1"/>
</dbReference>
<protein>
    <recommendedName>
        <fullName evidence="1">tRNA (guanine-N(1)-)-methyltransferase</fullName>
        <ecNumber evidence="1">2.1.1.228</ecNumber>
    </recommendedName>
    <alternativeName>
        <fullName evidence="1">M1G-methyltransferase</fullName>
    </alternativeName>
    <alternativeName>
        <fullName evidence="1">tRNA [GM37] methyltransferase</fullName>
    </alternativeName>
</protein>
<sequence length="243" mass="27961">MKIDILTLFPEMFAPLEHSIVGKAKEKGLLDIHYHNFRDYAEKARHVDDEPYGGGQGMLLRAQPIFDTIEQIEAKKPRIILLDPAGKPFTQAYAEELALEEELIFICGHYEGYDERIKTLVTDEISLGDFVLTGGELAAMTIVDATVRLIPQVLGKESSHQDDSFSSGLLEYPQYTRPYDYRGMTVPDVLMSGHHERIRLWRLEESLRKTYLRRPDLLERYDFSEEERKLLDKIKEALGQGED</sequence>
<keyword id="KW-0963">Cytoplasm</keyword>
<keyword id="KW-0489">Methyltransferase</keyword>
<keyword id="KW-0949">S-adenosyl-L-methionine</keyword>
<keyword id="KW-0808">Transferase</keyword>
<keyword id="KW-0819">tRNA processing</keyword>
<organism>
    <name type="scientific">Streptococcus pyogenes serotype M5 (strain Manfredo)</name>
    <dbReference type="NCBI Taxonomy" id="160491"/>
    <lineage>
        <taxon>Bacteria</taxon>
        <taxon>Bacillati</taxon>
        <taxon>Bacillota</taxon>
        <taxon>Bacilli</taxon>
        <taxon>Lactobacillales</taxon>
        <taxon>Streptococcaceae</taxon>
        <taxon>Streptococcus</taxon>
    </lineage>
</organism>